<keyword id="KW-1015">Disulfide bond</keyword>
<keyword id="KW-0372">Hormone</keyword>
<keyword id="KW-0964">Secreted</keyword>
<keyword id="KW-0732">Signal</keyword>
<keyword id="KW-0838">Vasoactive</keyword>
<gene>
    <name type="primary">nppb</name>
    <name type="synonym">bnp</name>
</gene>
<accession>Q805E8</accession>
<reference key="1">
    <citation type="journal article" date="2004" name="J. Mol. Endocrinol.">
        <title>Four natriuretic peptides (ANP, BNP, VNP and CNP) coexist in the sturgeon: identification of BNP in fish lineage.</title>
        <authorList>
            <person name="Kawakoshi A."/>
            <person name="Hyodo S."/>
            <person name="Inoue K."/>
            <person name="Kobayashi Y."/>
            <person name="Takei Y."/>
        </authorList>
    </citation>
    <scope>NUCLEOTIDE SEQUENCE [MRNA]</scope>
    <source>
        <tissue>Heart</tissue>
    </source>
</reference>
<evidence type="ECO:0000250" key="1"/>
<evidence type="ECO:0000255" key="2"/>
<evidence type="ECO:0000256" key="3">
    <source>
        <dbReference type="SAM" id="MobiDB-lite"/>
    </source>
</evidence>
<evidence type="ECO:0000305" key="4"/>
<protein>
    <recommendedName>
        <fullName>Brain natriuretic peptide</fullName>
    </recommendedName>
    <alternativeName>
        <fullName>B-type natriuretic peptide</fullName>
    </alternativeName>
</protein>
<proteinExistence type="evidence at transcript level"/>
<feature type="signal peptide" evidence="2">
    <location>
        <begin position="1"/>
        <end position="22"/>
    </location>
</feature>
<feature type="propeptide" id="PRO_0000001547">
    <location>
        <begin position="23"/>
        <end status="unknown"/>
    </location>
</feature>
<feature type="peptide" id="PRO_0000001548" description="Brain natriuretic peptide">
    <location>
        <begin status="unknown"/>
        <end position="138"/>
    </location>
</feature>
<feature type="region of interest" description="Disordered" evidence="3">
    <location>
        <begin position="50"/>
        <end position="84"/>
    </location>
</feature>
<feature type="region of interest" description="Disordered" evidence="3">
    <location>
        <begin position="99"/>
        <end position="138"/>
    </location>
</feature>
<feature type="disulfide bond" evidence="1">
    <location>
        <begin position="111"/>
        <end position="127"/>
    </location>
</feature>
<name>ANFB_OREMO</name>
<comment type="function">
    <text evidence="1">Cardiac hormone which may function as a paracrine antifibrotic factor in the heart. Also plays a key role in cardiovascular homeostasis through natriuresis, diuresis, vasorelaxation, and inhibition of renin and aldosterone secretion (By similarity).</text>
</comment>
<comment type="subcellular location">
    <subcellularLocation>
        <location>Secreted</location>
    </subcellularLocation>
</comment>
<comment type="similarity">
    <text evidence="4">Belongs to the natriuretic peptide family.</text>
</comment>
<dbReference type="EMBL" id="AB087284">
    <property type="protein sequence ID" value="BAC55025.1"/>
    <property type="molecule type" value="mRNA"/>
</dbReference>
<dbReference type="SMR" id="Q805E8"/>
<dbReference type="GO" id="GO:0005737">
    <property type="term" value="C:cytoplasm"/>
    <property type="evidence" value="ECO:0007669"/>
    <property type="project" value="TreeGrafter"/>
</dbReference>
<dbReference type="GO" id="GO:0005615">
    <property type="term" value="C:extracellular space"/>
    <property type="evidence" value="ECO:0007669"/>
    <property type="project" value="TreeGrafter"/>
</dbReference>
<dbReference type="GO" id="GO:0005179">
    <property type="term" value="F:hormone activity"/>
    <property type="evidence" value="ECO:0007669"/>
    <property type="project" value="UniProtKB-KW"/>
</dbReference>
<dbReference type="GO" id="GO:0051427">
    <property type="term" value="F:hormone receptor binding"/>
    <property type="evidence" value="ECO:0007669"/>
    <property type="project" value="TreeGrafter"/>
</dbReference>
<dbReference type="GO" id="GO:0097746">
    <property type="term" value="P:blood vessel diameter maintenance"/>
    <property type="evidence" value="ECO:0007669"/>
    <property type="project" value="UniProtKB-KW"/>
</dbReference>
<dbReference type="GO" id="GO:0006182">
    <property type="term" value="P:cGMP biosynthetic process"/>
    <property type="evidence" value="ECO:0000250"/>
    <property type="project" value="UniProtKB"/>
</dbReference>
<dbReference type="GO" id="GO:0019934">
    <property type="term" value="P:cGMP-mediated signaling"/>
    <property type="evidence" value="ECO:0007669"/>
    <property type="project" value="TreeGrafter"/>
</dbReference>
<dbReference type="GO" id="GO:0003085">
    <property type="term" value="P:negative regulation of systemic arterial blood pressure"/>
    <property type="evidence" value="ECO:0007669"/>
    <property type="project" value="TreeGrafter"/>
</dbReference>
<dbReference type="GO" id="GO:0007218">
    <property type="term" value="P:neuropeptide signaling pathway"/>
    <property type="evidence" value="ECO:0007669"/>
    <property type="project" value="TreeGrafter"/>
</dbReference>
<dbReference type="GO" id="GO:0007168">
    <property type="term" value="P:receptor guanylyl cyclase signaling pathway"/>
    <property type="evidence" value="ECO:0000250"/>
    <property type="project" value="UniProtKB"/>
</dbReference>
<dbReference type="InterPro" id="IPR000663">
    <property type="entry name" value="Natr_peptide"/>
</dbReference>
<dbReference type="InterPro" id="IPR030480">
    <property type="entry name" value="Natr_peptide_CS"/>
</dbReference>
<dbReference type="InterPro" id="IPR050787">
    <property type="entry name" value="Natriuretic_peptide"/>
</dbReference>
<dbReference type="InterPro" id="IPR002408">
    <property type="entry name" value="Natriuretic_peptide_brain"/>
</dbReference>
<dbReference type="PANTHER" id="PTHR14066">
    <property type="entry name" value="ATRIAL NATRIURETIC FACTOR PRECURSOR"/>
    <property type="match status" value="1"/>
</dbReference>
<dbReference type="PANTHER" id="PTHR14066:SF10">
    <property type="entry name" value="NATRIURETIC PEPTIDES B"/>
    <property type="match status" value="1"/>
</dbReference>
<dbReference type="Pfam" id="PF00212">
    <property type="entry name" value="ANP"/>
    <property type="match status" value="1"/>
</dbReference>
<dbReference type="PRINTS" id="PR00712">
    <property type="entry name" value="BNATPEPTIDE"/>
</dbReference>
<dbReference type="PRINTS" id="PR00710">
    <property type="entry name" value="NATPEPTIDES"/>
</dbReference>
<dbReference type="SMART" id="SM00183">
    <property type="entry name" value="NAT_PEP"/>
    <property type="match status" value="1"/>
</dbReference>
<dbReference type="PROSITE" id="PS00263">
    <property type="entry name" value="NATRIURETIC_PEPTIDE"/>
    <property type="match status" value="1"/>
</dbReference>
<organism>
    <name type="scientific">Oreochromis mossambicus</name>
    <name type="common">Mozambique tilapia</name>
    <name type="synonym">Tilapia mossambica</name>
    <dbReference type="NCBI Taxonomy" id="8127"/>
    <lineage>
        <taxon>Eukaryota</taxon>
        <taxon>Metazoa</taxon>
        <taxon>Chordata</taxon>
        <taxon>Craniata</taxon>
        <taxon>Vertebrata</taxon>
        <taxon>Euteleostomi</taxon>
        <taxon>Actinopterygii</taxon>
        <taxon>Neopterygii</taxon>
        <taxon>Teleostei</taxon>
        <taxon>Neoteleostei</taxon>
        <taxon>Acanthomorphata</taxon>
        <taxon>Ovalentaria</taxon>
        <taxon>Cichlomorphae</taxon>
        <taxon>Cichliformes</taxon>
        <taxon>Cichlidae</taxon>
        <taxon>African cichlids</taxon>
        <taxon>Pseudocrenilabrinae</taxon>
        <taxon>Oreochromini</taxon>
        <taxon>Oreochromis</taxon>
    </lineage>
</organism>
<sequence>MRLSSMWLCSLLLILKLQLSSTYPISTGLTDTDMDILKVLLSRLEESVSEQMAVDQSAPGQRDLLDSLSTEDAGDGPQPDAGLDEAEIREFLSAKNLKSVRNDSSRRSSGCFGRRMDRIGSMSSLGCNTVGRYNPKQR</sequence>